<dbReference type="EMBL" id="CP000750">
    <property type="protein sequence ID" value="ABS02186.1"/>
    <property type="molecule type" value="Genomic_DNA"/>
</dbReference>
<dbReference type="RefSeq" id="WP_012084972.1">
    <property type="nucleotide sequence ID" value="NC_009664.2"/>
</dbReference>
<dbReference type="SMR" id="A6W5U7"/>
<dbReference type="STRING" id="266940.Krad_0697"/>
<dbReference type="KEGG" id="kra:Krad_0697"/>
<dbReference type="eggNOG" id="COG0186">
    <property type="taxonomic scope" value="Bacteria"/>
</dbReference>
<dbReference type="HOGENOM" id="CLU_073626_1_0_11"/>
<dbReference type="OrthoDB" id="9811714at2"/>
<dbReference type="Proteomes" id="UP000001116">
    <property type="component" value="Chromosome"/>
</dbReference>
<dbReference type="GO" id="GO:0022627">
    <property type="term" value="C:cytosolic small ribosomal subunit"/>
    <property type="evidence" value="ECO:0007669"/>
    <property type="project" value="TreeGrafter"/>
</dbReference>
<dbReference type="GO" id="GO:0019843">
    <property type="term" value="F:rRNA binding"/>
    <property type="evidence" value="ECO:0007669"/>
    <property type="project" value="UniProtKB-UniRule"/>
</dbReference>
<dbReference type="GO" id="GO:0003735">
    <property type="term" value="F:structural constituent of ribosome"/>
    <property type="evidence" value="ECO:0007669"/>
    <property type="project" value="InterPro"/>
</dbReference>
<dbReference type="GO" id="GO:0006412">
    <property type="term" value="P:translation"/>
    <property type="evidence" value="ECO:0007669"/>
    <property type="project" value="UniProtKB-UniRule"/>
</dbReference>
<dbReference type="CDD" id="cd00364">
    <property type="entry name" value="Ribosomal_uS17"/>
    <property type="match status" value="1"/>
</dbReference>
<dbReference type="Gene3D" id="2.40.50.140">
    <property type="entry name" value="Nucleic acid-binding proteins"/>
    <property type="match status" value="1"/>
</dbReference>
<dbReference type="HAMAP" id="MF_01345_B">
    <property type="entry name" value="Ribosomal_uS17_B"/>
    <property type="match status" value="1"/>
</dbReference>
<dbReference type="InterPro" id="IPR012340">
    <property type="entry name" value="NA-bd_OB-fold"/>
</dbReference>
<dbReference type="InterPro" id="IPR000266">
    <property type="entry name" value="Ribosomal_uS17"/>
</dbReference>
<dbReference type="InterPro" id="IPR019984">
    <property type="entry name" value="Ribosomal_uS17_bact/chlr"/>
</dbReference>
<dbReference type="InterPro" id="IPR019979">
    <property type="entry name" value="Ribosomal_uS17_CS"/>
</dbReference>
<dbReference type="NCBIfam" id="NF004123">
    <property type="entry name" value="PRK05610.1"/>
    <property type="match status" value="1"/>
</dbReference>
<dbReference type="NCBIfam" id="TIGR03635">
    <property type="entry name" value="uS17_bact"/>
    <property type="match status" value="1"/>
</dbReference>
<dbReference type="PANTHER" id="PTHR10744">
    <property type="entry name" value="40S RIBOSOMAL PROTEIN S11 FAMILY MEMBER"/>
    <property type="match status" value="1"/>
</dbReference>
<dbReference type="PANTHER" id="PTHR10744:SF1">
    <property type="entry name" value="SMALL RIBOSOMAL SUBUNIT PROTEIN US17M"/>
    <property type="match status" value="1"/>
</dbReference>
<dbReference type="Pfam" id="PF00366">
    <property type="entry name" value="Ribosomal_S17"/>
    <property type="match status" value="1"/>
</dbReference>
<dbReference type="PRINTS" id="PR00973">
    <property type="entry name" value="RIBOSOMALS17"/>
</dbReference>
<dbReference type="SUPFAM" id="SSF50249">
    <property type="entry name" value="Nucleic acid-binding proteins"/>
    <property type="match status" value="1"/>
</dbReference>
<dbReference type="PROSITE" id="PS00056">
    <property type="entry name" value="RIBOSOMAL_S17"/>
    <property type="match status" value="1"/>
</dbReference>
<feature type="chain" id="PRO_1000214788" description="Small ribosomal subunit protein uS17">
    <location>
        <begin position="1"/>
        <end position="94"/>
    </location>
</feature>
<feature type="region of interest" description="Disordered" evidence="2">
    <location>
        <begin position="1"/>
        <end position="22"/>
    </location>
</feature>
<gene>
    <name evidence="1" type="primary">rpsQ</name>
    <name type="ordered locus">Krad_0697</name>
</gene>
<organism>
    <name type="scientific">Kineococcus radiotolerans (strain ATCC BAA-149 / DSM 14245 / SRS30216)</name>
    <dbReference type="NCBI Taxonomy" id="266940"/>
    <lineage>
        <taxon>Bacteria</taxon>
        <taxon>Bacillati</taxon>
        <taxon>Actinomycetota</taxon>
        <taxon>Actinomycetes</taxon>
        <taxon>Kineosporiales</taxon>
        <taxon>Kineosporiaceae</taxon>
        <taxon>Kineococcus</taxon>
    </lineage>
</organism>
<sequence>MSEQTSAASTTDRGDRKTRRGYVVSDKMQKTVVVEVEDRVKHPLYAKVIRRTTKVKAHDEVETAGVGDLVLIAETRPLSATKRWRVVEVLERAK</sequence>
<accession>A6W5U7</accession>
<proteinExistence type="inferred from homology"/>
<keyword id="KW-1185">Reference proteome</keyword>
<keyword id="KW-0687">Ribonucleoprotein</keyword>
<keyword id="KW-0689">Ribosomal protein</keyword>
<keyword id="KW-0694">RNA-binding</keyword>
<keyword id="KW-0699">rRNA-binding</keyword>
<reference key="1">
    <citation type="journal article" date="2008" name="PLoS ONE">
        <title>Survival in nuclear waste, extreme resistance, and potential applications gleaned from the genome sequence of Kineococcus radiotolerans SRS30216.</title>
        <authorList>
            <person name="Bagwell C.E."/>
            <person name="Bhat S."/>
            <person name="Hawkins G.M."/>
            <person name="Smith B.W."/>
            <person name="Biswas T."/>
            <person name="Hoover T.R."/>
            <person name="Saunders E."/>
            <person name="Han C.S."/>
            <person name="Tsodikov O.V."/>
            <person name="Shimkets L.J."/>
        </authorList>
    </citation>
    <scope>NUCLEOTIDE SEQUENCE [LARGE SCALE GENOMIC DNA]</scope>
    <source>
        <strain>ATCC BAA-149 / DSM 14245 / SRS30216</strain>
    </source>
</reference>
<name>RS17_KINRD</name>
<comment type="function">
    <text evidence="1">One of the primary rRNA binding proteins, it binds specifically to the 5'-end of 16S ribosomal RNA.</text>
</comment>
<comment type="subunit">
    <text evidence="1">Part of the 30S ribosomal subunit.</text>
</comment>
<comment type="similarity">
    <text evidence="1">Belongs to the universal ribosomal protein uS17 family.</text>
</comment>
<evidence type="ECO:0000255" key="1">
    <source>
        <dbReference type="HAMAP-Rule" id="MF_01345"/>
    </source>
</evidence>
<evidence type="ECO:0000256" key="2">
    <source>
        <dbReference type="SAM" id="MobiDB-lite"/>
    </source>
</evidence>
<evidence type="ECO:0000305" key="3"/>
<protein>
    <recommendedName>
        <fullName evidence="1">Small ribosomal subunit protein uS17</fullName>
    </recommendedName>
    <alternativeName>
        <fullName evidence="3">30S ribosomal protein S17</fullName>
    </alternativeName>
</protein>